<dbReference type="EMBL" id="CP000089">
    <property type="protein sequence ID" value="AAZ47204.1"/>
    <property type="molecule type" value="Genomic_DNA"/>
</dbReference>
<dbReference type="SMR" id="Q47D77"/>
<dbReference type="STRING" id="159087.Daro_2469"/>
<dbReference type="KEGG" id="dar:Daro_2469"/>
<dbReference type="eggNOG" id="COG3132">
    <property type="taxonomic scope" value="Bacteria"/>
</dbReference>
<dbReference type="HOGENOM" id="CLU_057831_0_0_4"/>
<dbReference type="OrthoDB" id="9784785at2"/>
<dbReference type="Gene3D" id="1.10.10.10">
    <property type="entry name" value="Winged helix-like DNA-binding domain superfamily/Winged helix DNA-binding domain"/>
    <property type="match status" value="2"/>
</dbReference>
<dbReference type="HAMAP" id="MF_01584">
    <property type="entry name" value="UPF0502"/>
    <property type="match status" value="1"/>
</dbReference>
<dbReference type="InterPro" id="IPR007432">
    <property type="entry name" value="DUF480"/>
</dbReference>
<dbReference type="InterPro" id="IPR036388">
    <property type="entry name" value="WH-like_DNA-bd_sf"/>
</dbReference>
<dbReference type="InterPro" id="IPR036390">
    <property type="entry name" value="WH_DNA-bd_sf"/>
</dbReference>
<dbReference type="PANTHER" id="PTHR38768">
    <property type="entry name" value="UPF0502 PROTEIN YCEH"/>
    <property type="match status" value="1"/>
</dbReference>
<dbReference type="PANTHER" id="PTHR38768:SF1">
    <property type="entry name" value="UPF0502 PROTEIN YCEH"/>
    <property type="match status" value="1"/>
</dbReference>
<dbReference type="Pfam" id="PF04337">
    <property type="entry name" value="DUF480"/>
    <property type="match status" value="1"/>
</dbReference>
<dbReference type="SUPFAM" id="SSF46785">
    <property type="entry name" value="Winged helix' DNA-binding domain"/>
    <property type="match status" value="2"/>
</dbReference>
<comment type="similarity">
    <text evidence="1">Belongs to the UPF0502 family.</text>
</comment>
<feature type="chain" id="PRO_0000309383" description="UPF0502 protein Daro_2469">
    <location>
        <begin position="1"/>
        <end position="213"/>
    </location>
</feature>
<protein>
    <recommendedName>
        <fullName evidence="1">UPF0502 protein Daro_2469</fullName>
    </recommendedName>
</protein>
<accession>Q47D77</accession>
<sequence>MAESTPKLSLLETRILGTLVEKQRTVPDTYPLSVNALMAGCNQKTSRNPVIETSEAEIVHALDSLKDLGLVREVSGSRVSRFEHLFEKALGVPTQASALLTVLMLRGPQTAGELRLNCERLHRFADISSVEAFLEELAAKEDGALVVELPRLPGSRENRWMHLLSGEPMIEAGAAGRSPSTGMQDIEELRARVSSLEAEVAELRALLLERSRE</sequence>
<name>Y2469_DECAR</name>
<evidence type="ECO:0000255" key="1">
    <source>
        <dbReference type="HAMAP-Rule" id="MF_01584"/>
    </source>
</evidence>
<gene>
    <name type="ordered locus">Daro_2469</name>
</gene>
<proteinExistence type="inferred from homology"/>
<organism>
    <name type="scientific">Dechloromonas aromatica (strain RCB)</name>
    <dbReference type="NCBI Taxonomy" id="159087"/>
    <lineage>
        <taxon>Bacteria</taxon>
        <taxon>Pseudomonadati</taxon>
        <taxon>Pseudomonadota</taxon>
        <taxon>Betaproteobacteria</taxon>
        <taxon>Rhodocyclales</taxon>
        <taxon>Azonexaceae</taxon>
        <taxon>Dechloromonas</taxon>
    </lineage>
</organism>
<reference key="1">
    <citation type="journal article" date="2009" name="BMC Genomics">
        <title>Metabolic analysis of the soil microbe Dechloromonas aromatica str. RCB: indications of a surprisingly complex life-style and cryptic anaerobic pathways for aromatic degradation.</title>
        <authorList>
            <person name="Salinero K.K."/>
            <person name="Keller K."/>
            <person name="Feil W.S."/>
            <person name="Feil H."/>
            <person name="Trong S."/>
            <person name="Di Bartolo G."/>
            <person name="Lapidus A."/>
        </authorList>
    </citation>
    <scope>NUCLEOTIDE SEQUENCE [LARGE SCALE GENOMIC DNA]</scope>
    <source>
        <strain>RCB</strain>
    </source>
</reference>